<comment type="function">
    <text evidence="1">DNA-dependent RNA polymerase catalyzes the transcription of DNA into RNA using the four ribonucleoside triphosphates as substrates.</text>
</comment>
<comment type="catalytic activity">
    <reaction evidence="1">
        <text>RNA(n) + a ribonucleoside 5'-triphosphate = RNA(n+1) + diphosphate</text>
        <dbReference type="Rhea" id="RHEA:21248"/>
        <dbReference type="Rhea" id="RHEA-COMP:14527"/>
        <dbReference type="Rhea" id="RHEA-COMP:17342"/>
        <dbReference type="ChEBI" id="CHEBI:33019"/>
        <dbReference type="ChEBI" id="CHEBI:61557"/>
        <dbReference type="ChEBI" id="CHEBI:140395"/>
        <dbReference type="EC" id="2.7.7.6"/>
    </reaction>
</comment>
<comment type="cofactor">
    <cofactor evidence="1">
        <name>Mg(2+)</name>
        <dbReference type="ChEBI" id="CHEBI:18420"/>
    </cofactor>
    <text evidence="1">Binds 1 Mg(2+) ion per subunit.</text>
</comment>
<comment type="cofactor">
    <cofactor evidence="1">
        <name>Zn(2+)</name>
        <dbReference type="ChEBI" id="CHEBI:29105"/>
    </cofactor>
    <text evidence="1">Binds 1 Zn(2+) ion per subunit.</text>
</comment>
<comment type="subunit">
    <text evidence="1">In plastids the minimal PEP RNA polymerase catalytic core is composed of four subunits: alpha, beta, beta', and beta''. When a (nuclear-encoded) sigma factor is associated with the core the holoenzyme is formed, which can initiate transcription.</text>
</comment>
<comment type="subcellular location">
    <subcellularLocation>
        <location evidence="1">Plastid</location>
        <location evidence="1">Chloroplast</location>
    </subcellularLocation>
</comment>
<comment type="similarity">
    <text evidence="1">Belongs to the RNA polymerase beta' chain family. RpoC1 subfamily.</text>
</comment>
<comment type="sequence caution" evidence="2">
    <conflict type="erroneous initiation">
        <sequence resource="EMBL-CDS" id="AAS46047"/>
    </conflict>
    <text>Extended N-terminus.</text>
</comment>
<dbReference type="EC" id="2.7.7.6" evidence="1"/>
<dbReference type="EMBL" id="AY522329">
    <property type="protein sequence ID" value="AAS46047.1"/>
    <property type="status" value="ALT_INIT"/>
    <property type="molecule type" value="Genomic_DNA"/>
</dbReference>
<dbReference type="RefSeq" id="YP_009161355.1">
    <property type="nucleotide sequence ID" value="NC_027678.1"/>
</dbReference>
<dbReference type="RefSeq" id="YP_654207.2">
    <property type="nucleotide sequence ID" value="NC_008155.1"/>
</dbReference>
<dbReference type="SMR" id="P0C505"/>
<dbReference type="STRING" id="39946.P0C505"/>
<dbReference type="GeneID" id="4126923"/>
<dbReference type="HOGENOM" id="CLU_030022_2_0_1"/>
<dbReference type="Proteomes" id="UP000007015">
    <property type="component" value="Chloroplast"/>
</dbReference>
<dbReference type="GO" id="GO:0009507">
    <property type="term" value="C:chloroplast"/>
    <property type="evidence" value="ECO:0007669"/>
    <property type="project" value="UniProtKB-SubCell"/>
</dbReference>
<dbReference type="GO" id="GO:0000428">
    <property type="term" value="C:DNA-directed RNA polymerase complex"/>
    <property type="evidence" value="ECO:0007669"/>
    <property type="project" value="UniProtKB-KW"/>
</dbReference>
<dbReference type="GO" id="GO:0005739">
    <property type="term" value="C:mitochondrion"/>
    <property type="evidence" value="ECO:0007669"/>
    <property type="project" value="GOC"/>
</dbReference>
<dbReference type="GO" id="GO:0009536">
    <property type="term" value="C:plastid"/>
    <property type="evidence" value="ECO:0000305"/>
    <property type="project" value="Gramene"/>
</dbReference>
<dbReference type="GO" id="GO:0003677">
    <property type="term" value="F:DNA binding"/>
    <property type="evidence" value="ECO:0007669"/>
    <property type="project" value="UniProtKB-UniRule"/>
</dbReference>
<dbReference type="GO" id="GO:0003899">
    <property type="term" value="F:DNA-directed RNA polymerase activity"/>
    <property type="evidence" value="ECO:0007669"/>
    <property type="project" value="UniProtKB-UniRule"/>
</dbReference>
<dbReference type="GO" id="GO:0000287">
    <property type="term" value="F:magnesium ion binding"/>
    <property type="evidence" value="ECO:0007669"/>
    <property type="project" value="UniProtKB-UniRule"/>
</dbReference>
<dbReference type="GO" id="GO:0008270">
    <property type="term" value="F:zinc ion binding"/>
    <property type="evidence" value="ECO:0007669"/>
    <property type="project" value="UniProtKB-UniRule"/>
</dbReference>
<dbReference type="GO" id="GO:0006351">
    <property type="term" value="P:DNA-templated transcription"/>
    <property type="evidence" value="ECO:0007669"/>
    <property type="project" value="UniProtKB-UniRule"/>
</dbReference>
<dbReference type="Gene3D" id="1.10.40.90">
    <property type="match status" value="1"/>
</dbReference>
<dbReference type="Gene3D" id="2.40.40.20">
    <property type="match status" value="1"/>
</dbReference>
<dbReference type="Gene3D" id="4.10.860.120">
    <property type="entry name" value="RNA polymerase II, clamp domain"/>
    <property type="match status" value="1"/>
</dbReference>
<dbReference type="Gene3D" id="1.10.274.100">
    <property type="entry name" value="RNA polymerase Rpb1, domain 3"/>
    <property type="match status" value="1"/>
</dbReference>
<dbReference type="HAMAP" id="MF_01323">
    <property type="entry name" value="RNApol_bact_RpoC1"/>
    <property type="match status" value="1"/>
</dbReference>
<dbReference type="InterPro" id="IPR045867">
    <property type="entry name" value="DNA-dir_RpoC_beta_prime"/>
</dbReference>
<dbReference type="InterPro" id="IPR000722">
    <property type="entry name" value="RNA_pol_asu"/>
</dbReference>
<dbReference type="InterPro" id="IPR006592">
    <property type="entry name" value="RNA_pol_N"/>
</dbReference>
<dbReference type="InterPro" id="IPR007080">
    <property type="entry name" value="RNA_pol_Rpb1_1"/>
</dbReference>
<dbReference type="InterPro" id="IPR042102">
    <property type="entry name" value="RNA_pol_Rpb1_3_sf"/>
</dbReference>
<dbReference type="InterPro" id="IPR044893">
    <property type="entry name" value="RNA_pol_Rpb1_clamp_domain"/>
</dbReference>
<dbReference type="InterPro" id="IPR034678">
    <property type="entry name" value="RNApol_RpoC1"/>
</dbReference>
<dbReference type="PANTHER" id="PTHR19376">
    <property type="entry name" value="DNA-DIRECTED RNA POLYMERASE"/>
    <property type="match status" value="1"/>
</dbReference>
<dbReference type="PANTHER" id="PTHR19376:SF54">
    <property type="entry name" value="DNA-DIRECTED RNA POLYMERASE SUBUNIT BETA"/>
    <property type="match status" value="1"/>
</dbReference>
<dbReference type="Pfam" id="PF04997">
    <property type="entry name" value="RNA_pol_Rpb1_1"/>
    <property type="match status" value="1"/>
</dbReference>
<dbReference type="Pfam" id="PF00623">
    <property type="entry name" value="RNA_pol_Rpb1_2"/>
    <property type="match status" value="2"/>
</dbReference>
<dbReference type="SMART" id="SM00663">
    <property type="entry name" value="RPOLA_N"/>
    <property type="match status" value="1"/>
</dbReference>
<dbReference type="SUPFAM" id="SSF64484">
    <property type="entry name" value="beta and beta-prime subunits of DNA dependent RNA-polymerase"/>
    <property type="match status" value="1"/>
</dbReference>
<protein>
    <recommendedName>
        <fullName evidence="1">DNA-directed RNA polymerase subunit beta'</fullName>
        <ecNumber evidence="1">2.7.7.6</ecNumber>
    </recommendedName>
    <alternativeName>
        <fullName evidence="1">PEP</fullName>
    </alternativeName>
    <alternativeName>
        <fullName evidence="1">Plastid-encoded RNA polymerase subunit beta'</fullName>
        <shortName evidence="1">RNA polymerase subunit beta'</shortName>
    </alternativeName>
</protein>
<evidence type="ECO:0000255" key="1">
    <source>
        <dbReference type="HAMAP-Rule" id="MF_01323"/>
    </source>
</evidence>
<evidence type="ECO:0000305" key="2"/>
<gene>
    <name evidence="1" type="primary">rpoC1</name>
    <name type="ORF">9311035</name>
</gene>
<reference key="1">
    <citation type="journal article" date="2004" name="Plant Physiol.">
        <title>A comparison of rice chloroplast genomes.</title>
        <authorList>
            <person name="Tang J."/>
            <person name="Xia H."/>
            <person name="Cao M."/>
            <person name="Zhang X."/>
            <person name="Zeng W."/>
            <person name="Hu S."/>
            <person name="Tong W."/>
            <person name="Wang J."/>
            <person name="Wang J."/>
            <person name="Yu J."/>
            <person name="Yang H."/>
            <person name="Zhu L."/>
        </authorList>
    </citation>
    <scope>NUCLEOTIDE SEQUENCE [LARGE SCALE GENOMIC DNA]</scope>
    <source>
        <strain>cv. 93-11</strain>
    </source>
</reference>
<name>RPOC1_ORYSI</name>
<keyword id="KW-0150">Chloroplast</keyword>
<keyword id="KW-0240">DNA-directed RNA polymerase</keyword>
<keyword id="KW-0460">Magnesium</keyword>
<keyword id="KW-0479">Metal-binding</keyword>
<keyword id="KW-0548">Nucleotidyltransferase</keyword>
<keyword id="KW-0934">Plastid</keyword>
<keyword id="KW-1185">Reference proteome</keyword>
<keyword id="KW-0804">Transcription</keyword>
<keyword id="KW-0808">Transferase</keyword>
<keyword id="KW-0862">Zinc</keyword>
<feature type="chain" id="PRO_0000290095" description="DNA-directed RNA polymerase subunit beta'">
    <location>
        <begin position="1"/>
        <end position="682"/>
    </location>
</feature>
<feature type="binding site" evidence="1">
    <location>
        <position position="69"/>
    </location>
    <ligand>
        <name>Zn(2+)</name>
        <dbReference type="ChEBI" id="CHEBI:29105"/>
    </ligand>
</feature>
<feature type="binding site" evidence="1">
    <location>
        <position position="71"/>
    </location>
    <ligand>
        <name>Zn(2+)</name>
        <dbReference type="ChEBI" id="CHEBI:29105"/>
    </ligand>
</feature>
<feature type="binding site" evidence="1">
    <location>
        <position position="87"/>
    </location>
    <ligand>
        <name>Zn(2+)</name>
        <dbReference type="ChEBI" id="CHEBI:29105"/>
    </ligand>
</feature>
<feature type="binding site" evidence="1">
    <location>
        <position position="90"/>
    </location>
    <ligand>
        <name>Zn(2+)</name>
        <dbReference type="ChEBI" id="CHEBI:29105"/>
    </ligand>
</feature>
<feature type="binding site" evidence="1">
    <location>
        <position position="489"/>
    </location>
    <ligand>
        <name>Mg(2+)</name>
        <dbReference type="ChEBI" id="CHEBI:18420"/>
    </ligand>
</feature>
<feature type="binding site" evidence="1">
    <location>
        <position position="491"/>
    </location>
    <ligand>
        <name>Mg(2+)</name>
        <dbReference type="ChEBI" id="CHEBI:18420"/>
    </ligand>
</feature>
<feature type="binding site" evidence="1">
    <location>
        <position position="493"/>
    </location>
    <ligand>
        <name>Mg(2+)</name>
        <dbReference type="ChEBI" id="CHEBI:18420"/>
    </ligand>
</feature>
<accession>P0C505</accession>
<accession>P12092</accession>
<accession>Q6QY19</accession>
<accession>Q6QY82</accession>
<proteinExistence type="inferred from homology"/>
<organism>
    <name type="scientific">Oryza sativa subsp. indica</name>
    <name type="common">Rice</name>
    <dbReference type="NCBI Taxonomy" id="39946"/>
    <lineage>
        <taxon>Eukaryota</taxon>
        <taxon>Viridiplantae</taxon>
        <taxon>Streptophyta</taxon>
        <taxon>Embryophyta</taxon>
        <taxon>Tracheophyta</taxon>
        <taxon>Spermatophyta</taxon>
        <taxon>Magnoliopsida</taxon>
        <taxon>Liliopsida</taxon>
        <taxon>Poales</taxon>
        <taxon>Poaceae</taxon>
        <taxon>BOP clade</taxon>
        <taxon>Oryzoideae</taxon>
        <taxon>Oryzeae</taxon>
        <taxon>Oryzinae</taxon>
        <taxon>Oryza</taxon>
        <taxon>Oryza sativa</taxon>
    </lineage>
</organism>
<sequence>MIDQYKHQQLQIGLVSPQQIKAWANKTLPNGEVVGEVTRPSTFHYKTDKPEKDGLFCERIFGPIKSRICACGNSRASGAENEDERFCQKCGVEFVDSRIRRYQMGYIKLACPVTHVWYLKGLPSYIANLLDKPLKKLEGLVYGDFSFARPSAKKPTFLRLRGLFEDEISSCNHSISPFFSTPGFTTFRNREIATGAGAIREQLADLDLRIILENSSVEWKELEDEGYSGDEWEDRKRRIRKVFLIRRMQLAKHFIQTNVEPEWMVLCLLPVLPPELRPIVYRSGDKVVTSDINELYKRVIRRNNNLAYLLKRSELAPADLVMCQEKLVQEAVDTLLDSGSRGQPTRDGHNKVYKSLSDVIEGKEGRFRETLLGKRVDYSGRSVIVVGPSLSLHQCGLPLEIAIKLFQLFVIRDLITKRATSNVRIAKRKIWEKEPIVWEILQEVMRGHPVLLNRAPTLHRLGIQAFQPTLVEGRTICLHPLVCKGFNADFDGDQMAVHLPLSLEAQAEARLLMFSHMNLLSPAIGDPICVPTQDMLIGLYVLTIGNRRGICANRYNSCGNYPNQKVNYNNNNPKYTKDKESLFSSSYDALGAYRQKQICLDSPLWLRWKLDQRVIGLREVPIEVQYESLGTYREIYAHYLVVGNRKKEIRSIYIRTTLGHISFYREIEEAIQGFSQAYSYTI</sequence>
<geneLocation type="chloroplast"/>